<organism>
    <name type="scientific">Haemophilus influenzae (strain ATCC 51907 / DSM 11121 / KW20 / Rd)</name>
    <dbReference type="NCBI Taxonomy" id="71421"/>
    <lineage>
        <taxon>Bacteria</taxon>
        <taxon>Pseudomonadati</taxon>
        <taxon>Pseudomonadota</taxon>
        <taxon>Gammaproteobacteria</taxon>
        <taxon>Pasteurellales</taxon>
        <taxon>Pasteurellaceae</taxon>
        <taxon>Haemophilus</taxon>
    </lineage>
</organism>
<accession>Q57163</accession>
<proteinExistence type="inferred from homology"/>
<sequence length="474" mass="53640">MTQKLHIKTWGCQMNEYDSSKMADLLLSTHGLELTEAPEEADVLLLNTCSIREKAQEKVFHQLGRWKELKKNNPNLVIGVGGCVASQEGEHIRHRAPYVDIIFGPQTLHRLPEMINQIRGGKSSVVDVSFPEIEKFDRLPEPRAEGPTAFVSIMEGCNKYCTFCVVPYTRGEEVSRPVDDVLFEIAQLAEQGVREVNLLGQNVNAYRGPTHDGQICSFAELLRLVASIDGIDRLRFTTSHPIEFTDDIIDVYRDTPELVSFLHLPVQAGSDRVLTMMKRAHTALEYKSIIRKLRAVRPDIQISSDFIVGFPGETAEDFEQTMNLIAQVNFDMSFSFVYSARPGTPAADMPDDVTEDEKKQRLYVLQERINQQAAQFSRRMLGTEQRVLVEGPSKKDIMELTGRTETNRIVNFQGSPEMIGKFVDVKITDVYTNSLRGEVVRTEDEMGLRIAQSPQEVMNRTRKEDELGVGRYHG</sequence>
<reference key="1">
    <citation type="journal article" date="1995" name="Science">
        <title>Whole-genome random sequencing and assembly of Haemophilus influenzae Rd.</title>
        <authorList>
            <person name="Fleischmann R.D."/>
            <person name="Adams M.D."/>
            <person name="White O."/>
            <person name="Clayton R.A."/>
            <person name="Kirkness E.F."/>
            <person name="Kerlavage A.R."/>
            <person name="Bult C.J."/>
            <person name="Tomb J.-F."/>
            <person name="Dougherty B.A."/>
            <person name="Merrick J.M."/>
            <person name="McKenney K."/>
            <person name="Sutton G.G."/>
            <person name="FitzHugh W."/>
            <person name="Fields C.A."/>
            <person name="Gocayne J.D."/>
            <person name="Scott J.D."/>
            <person name="Shirley R."/>
            <person name="Liu L.-I."/>
            <person name="Glodek A."/>
            <person name="Kelley J.M."/>
            <person name="Weidman J.F."/>
            <person name="Phillips C.A."/>
            <person name="Spriggs T."/>
            <person name="Hedblom E."/>
            <person name="Cotton M.D."/>
            <person name="Utterback T.R."/>
            <person name="Hanna M.C."/>
            <person name="Nguyen D.T."/>
            <person name="Saudek D.M."/>
            <person name="Brandon R.C."/>
            <person name="Fine L.D."/>
            <person name="Fritchman J.L."/>
            <person name="Fuhrmann J.L."/>
            <person name="Geoghagen N.S.M."/>
            <person name="Gnehm C.L."/>
            <person name="McDonald L.A."/>
            <person name="Small K.V."/>
            <person name="Fraser C.M."/>
            <person name="Smith H.O."/>
            <person name="Venter J.C."/>
        </authorList>
    </citation>
    <scope>NUCLEOTIDE SEQUENCE [LARGE SCALE GENOMIC DNA]</scope>
    <source>
        <strain>ATCC 51907 / DSM 11121 / KW20 / Rd</strain>
    </source>
</reference>
<comment type="function">
    <text evidence="1">Catalyzes the methylthiolation of N6-(dimethylallyl)adenosine (i(6)A), leading to the formation of 2-methylthio-N6-(dimethylallyl)adenosine (ms(2)i(6)A) at position 37 in tRNAs that read codons beginning with uridine.</text>
</comment>
<comment type="catalytic activity">
    <reaction evidence="1">
        <text>N(6)-dimethylallyladenosine(37) in tRNA + (sulfur carrier)-SH + AH2 + 2 S-adenosyl-L-methionine = 2-methylsulfanyl-N(6)-dimethylallyladenosine(37) in tRNA + (sulfur carrier)-H + 5'-deoxyadenosine + L-methionine + A + S-adenosyl-L-homocysteine + 2 H(+)</text>
        <dbReference type="Rhea" id="RHEA:37067"/>
        <dbReference type="Rhea" id="RHEA-COMP:10375"/>
        <dbReference type="Rhea" id="RHEA-COMP:10376"/>
        <dbReference type="Rhea" id="RHEA-COMP:14737"/>
        <dbReference type="Rhea" id="RHEA-COMP:14739"/>
        <dbReference type="ChEBI" id="CHEBI:13193"/>
        <dbReference type="ChEBI" id="CHEBI:15378"/>
        <dbReference type="ChEBI" id="CHEBI:17319"/>
        <dbReference type="ChEBI" id="CHEBI:17499"/>
        <dbReference type="ChEBI" id="CHEBI:29917"/>
        <dbReference type="ChEBI" id="CHEBI:57844"/>
        <dbReference type="ChEBI" id="CHEBI:57856"/>
        <dbReference type="ChEBI" id="CHEBI:59789"/>
        <dbReference type="ChEBI" id="CHEBI:64428"/>
        <dbReference type="ChEBI" id="CHEBI:74415"/>
        <dbReference type="ChEBI" id="CHEBI:74417"/>
        <dbReference type="EC" id="2.8.4.3"/>
    </reaction>
</comment>
<comment type="cofactor">
    <cofactor evidence="1">
        <name>[4Fe-4S] cluster</name>
        <dbReference type="ChEBI" id="CHEBI:49883"/>
    </cofactor>
    <text evidence="1">Binds 2 [4Fe-4S] clusters. One cluster is coordinated with 3 cysteines and an exchangeable S-adenosyl-L-methionine.</text>
</comment>
<comment type="subunit">
    <text evidence="1">Monomer.</text>
</comment>
<comment type="subcellular location">
    <subcellularLocation>
        <location evidence="1">Cytoplasm</location>
    </subcellularLocation>
</comment>
<comment type="similarity">
    <text evidence="1">Belongs to the methylthiotransferase family. MiaB subfamily.</text>
</comment>
<name>MIAB_HAEIN</name>
<gene>
    <name evidence="1" type="primary">miaB</name>
    <name type="ordered locus">HI_0019</name>
</gene>
<keyword id="KW-0004">4Fe-4S</keyword>
<keyword id="KW-0963">Cytoplasm</keyword>
<keyword id="KW-0408">Iron</keyword>
<keyword id="KW-0411">Iron-sulfur</keyword>
<keyword id="KW-0479">Metal-binding</keyword>
<keyword id="KW-1185">Reference proteome</keyword>
<keyword id="KW-0949">S-adenosyl-L-methionine</keyword>
<keyword id="KW-0808">Transferase</keyword>
<keyword id="KW-0819">tRNA processing</keyword>
<evidence type="ECO:0000255" key="1">
    <source>
        <dbReference type="HAMAP-Rule" id="MF_01864"/>
    </source>
</evidence>
<evidence type="ECO:0000255" key="2">
    <source>
        <dbReference type="PROSITE-ProRule" id="PRU01266"/>
    </source>
</evidence>
<feature type="chain" id="PRO_0000141737" description="tRNA-2-methylthio-N(6)-dimethylallyladenosine synthase">
    <location>
        <begin position="1"/>
        <end position="474"/>
    </location>
</feature>
<feature type="domain" description="MTTase N-terminal" evidence="1">
    <location>
        <begin position="3"/>
        <end position="120"/>
    </location>
</feature>
<feature type="domain" description="Radical SAM core" evidence="2">
    <location>
        <begin position="143"/>
        <end position="375"/>
    </location>
</feature>
<feature type="domain" description="TRAM" evidence="1">
    <location>
        <begin position="378"/>
        <end position="441"/>
    </location>
</feature>
<feature type="binding site" evidence="1">
    <location>
        <position position="12"/>
    </location>
    <ligand>
        <name>[4Fe-4S] cluster</name>
        <dbReference type="ChEBI" id="CHEBI:49883"/>
        <label>1</label>
    </ligand>
</feature>
<feature type="binding site" evidence="1">
    <location>
        <position position="49"/>
    </location>
    <ligand>
        <name>[4Fe-4S] cluster</name>
        <dbReference type="ChEBI" id="CHEBI:49883"/>
        <label>1</label>
    </ligand>
</feature>
<feature type="binding site" evidence="1">
    <location>
        <position position="83"/>
    </location>
    <ligand>
        <name>[4Fe-4S] cluster</name>
        <dbReference type="ChEBI" id="CHEBI:49883"/>
        <label>1</label>
    </ligand>
</feature>
<feature type="binding site" evidence="1">
    <location>
        <position position="157"/>
    </location>
    <ligand>
        <name>[4Fe-4S] cluster</name>
        <dbReference type="ChEBI" id="CHEBI:49883"/>
        <label>2</label>
        <note>4Fe-4S-S-AdoMet</note>
    </ligand>
</feature>
<feature type="binding site" evidence="1">
    <location>
        <position position="161"/>
    </location>
    <ligand>
        <name>[4Fe-4S] cluster</name>
        <dbReference type="ChEBI" id="CHEBI:49883"/>
        <label>2</label>
        <note>4Fe-4S-S-AdoMet</note>
    </ligand>
</feature>
<feature type="binding site" evidence="1">
    <location>
        <position position="164"/>
    </location>
    <ligand>
        <name>[4Fe-4S] cluster</name>
        <dbReference type="ChEBI" id="CHEBI:49883"/>
        <label>2</label>
        <note>4Fe-4S-S-AdoMet</note>
    </ligand>
</feature>
<protein>
    <recommendedName>
        <fullName evidence="1">tRNA-2-methylthio-N(6)-dimethylallyladenosine synthase</fullName>
        <ecNumber evidence="1">2.8.4.3</ecNumber>
    </recommendedName>
    <alternativeName>
        <fullName evidence="1">(Dimethylallyl)adenosine tRNA methylthiotransferase MiaB</fullName>
    </alternativeName>
    <alternativeName>
        <fullName evidence="1">tRNA-i(6)A37 methylthiotransferase</fullName>
    </alternativeName>
</protein>
<dbReference type="EC" id="2.8.4.3" evidence="1"/>
<dbReference type="EMBL" id="L42023">
    <property type="protein sequence ID" value="AAC21697.1"/>
    <property type="molecule type" value="Genomic_DNA"/>
</dbReference>
<dbReference type="PIR" id="D64140">
    <property type="entry name" value="D64140"/>
</dbReference>
<dbReference type="RefSeq" id="NP_438192.1">
    <property type="nucleotide sequence ID" value="NC_000907.1"/>
</dbReference>
<dbReference type="SMR" id="Q57163"/>
<dbReference type="STRING" id="71421.HI_0019"/>
<dbReference type="EnsemblBacteria" id="AAC21697">
    <property type="protein sequence ID" value="AAC21697"/>
    <property type="gene ID" value="HI_0019"/>
</dbReference>
<dbReference type="KEGG" id="hin:HI_0019"/>
<dbReference type="PATRIC" id="fig|71421.8.peg.19"/>
<dbReference type="eggNOG" id="COG0621">
    <property type="taxonomic scope" value="Bacteria"/>
</dbReference>
<dbReference type="HOGENOM" id="CLU_018697_2_0_6"/>
<dbReference type="OrthoDB" id="9805215at2"/>
<dbReference type="PhylomeDB" id="Q57163"/>
<dbReference type="BioCyc" id="HINF71421:G1GJ1-19-MONOMER"/>
<dbReference type="Proteomes" id="UP000000579">
    <property type="component" value="Chromosome"/>
</dbReference>
<dbReference type="GO" id="GO:0005829">
    <property type="term" value="C:cytosol"/>
    <property type="evidence" value="ECO:0000318"/>
    <property type="project" value="GO_Central"/>
</dbReference>
<dbReference type="GO" id="GO:0051539">
    <property type="term" value="F:4 iron, 4 sulfur cluster binding"/>
    <property type="evidence" value="ECO:0000318"/>
    <property type="project" value="GO_Central"/>
</dbReference>
<dbReference type="GO" id="GO:0046872">
    <property type="term" value="F:metal ion binding"/>
    <property type="evidence" value="ECO:0007669"/>
    <property type="project" value="UniProtKB-KW"/>
</dbReference>
<dbReference type="GO" id="GO:0035597">
    <property type="term" value="F:N6-isopentenyladenosine methylthiotransferase activity"/>
    <property type="evidence" value="ECO:0000318"/>
    <property type="project" value="GO_Central"/>
</dbReference>
<dbReference type="GO" id="GO:0035600">
    <property type="term" value="P:tRNA methylthiolation"/>
    <property type="evidence" value="ECO:0000318"/>
    <property type="project" value="GO_Central"/>
</dbReference>
<dbReference type="CDD" id="cd01335">
    <property type="entry name" value="Radical_SAM"/>
    <property type="match status" value="1"/>
</dbReference>
<dbReference type="FunFam" id="3.40.50.12160:FF:000001">
    <property type="entry name" value="tRNA-2-methylthio-N(6)-dimethylallyladenosine synthase"/>
    <property type="match status" value="1"/>
</dbReference>
<dbReference type="FunFam" id="3.80.30.20:FF:000001">
    <property type="entry name" value="tRNA-2-methylthio-N(6)-dimethylallyladenosine synthase 2"/>
    <property type="match status" value="1"/>
</dbReference>
<dbReference type="Gene3D" id="3.40.50.12160">
    <property type="entry name" value="Methylthiotransferase, N-terminal domain"/>
    <property type="match status" value="1"/>
</dbReference>
<dbReference type="Gene3D" id="3.80.30.20">
    <property type="entry name" value="tm_1862 like domain"/>
    <property type="match status" value="1"/>
</dbReference>
<dbReference type="HAMAP" id="MF_01864">
    <property type="entry name" value="tRNA_metthiotr_MiaB"/>
    <property type="match status" value="1"/>
</dbReference>
<dbReference type="InterPro" id="IPR006638">
    <property type="entry name" value="Elp3/MiaA/NifB-like_rSAM"/>
</dbReference>
<dbReference type="InterPro" id="IPR005839">
    <property type="entry name" value="Methylthiotransferase"/>
</dbReference>
<dbReference type="InterPro" id="IPR020612">
    <property type="entry name" value="Methylthiotransferase_CS"/>
</dbReference>
<dbReference type="InterPro" id="IPR013848">
    <property type="entry name" value="Methylthiotransferase_N"/>
</dbReference>
<dbReference type="InterPro" id="IPR038135">
    <property type="entry name" value="Methylthiotransferase_N_sf"/>
</dbReference>
<dbReference type="InterPro" id="IPR006463">
    <property type="entry name" value="MiaB_methiolase"/>
</dbReference>
<dbReference type="InterPro" id="IPR007197">
    <property type="entry name" value="rSAM"/>
</dbReference>
<dbReference type="InterPro" id="IPR023404">
    <property type="entry name" value="rSAM_horseshoe"/>
</dbReference>
<dbReference type="InterPro" id="IPR002792">
    <property type="entry name" value="TRAM_dom"/>
</dbReference>
<dbReference type="NCBIfam" id="TIGR01574">
    <property type="entry name" value="miaB-methiolase"/>
    <property type="match status" value="1"/>
</dbReference>
<dbReference type="NCBIfam" id="TIGR00089">
    <property type="entry name" value="MiaB/RimO family radical SAM methylthiotransferase"/>
    <property type="match status" value="1"/>
</dbReference>
<dbReference type="PANTHER" id="PTHR43020">
    <property type="entry name" value="CDK5 REGULATORY SUBUNIT-ASSOCIATED PROTEIN 1"/>
    <property type="match status" value="1"/>
</dbReference>
<dbReference type="PANTHER" id="PTHR43020:SF2">
    <property type="entry name" value="MITOCHONDRIAL TRNA METHYLTHIOTRANSFERASE CDK5RAP1"/>
    <property type="match status" value="1"/>
</dbReference>
<dbReference type="Pfam" id="PF04055">
    <property type="entry name" value="Radical_SAM"/>
    <property type="match status" value="1"/>
</dbReference>
<dbReference type="Pfam" id="PF01938">
    <property type="entry name" value="TRAM"/>
    <property type="match status" value="1"/>
</dbReference>
<dbReference type="Pfam" id="PF00919">
    <property type="entry name" value="UPF0004"/>
    <property type="match status" value="1"/>
</dbReference>
<dbReference type="SFLD" id="SFLDF00273">
    <property type="entry name" value="(dimethylallyl)adenosine_tRNA"/>
    <property type="match status" value="1"/>
</dbReference>
<dbReference type="SFLD" id="SFLDG01082">
    <property type="entry name" value="B12-binding_domain_containing"/>
    <property type="match status" value="1"/>
</dbReference>
<dbReference type="SFLD" id="SFLDS00029">
    <property type="entry name" value="Radical_SAM"/>
    <property type="match status" value="1"/>
</dbReference>
<dbReference type="SMART" id="SM00729">
    <property type="entry name" value="Elp3"/>
    <property type="match status" value="1"/>
</dbReference>
<dbReference type="SUPFAM" id="SSF102114">
    <property type="entry name" value="Radical SAM enzymes"/>
    <property type="match status" value="1"/>
</dbReference>
<dbReference type="PROSITE" id="PS51449">
    <property type="entry name" value="MTTASE_N"/>
    <property type="match status" value="1"/>
</dbReference>
<dbReference type="PROSITE" id="PS01278">
    <property type="entry name" value="MTTASE_RADICAL"/>
    <property type="match status" value="1"/>
</dbReference>
<dbReference type="PROSITE" id="PS51918">
    <property type="entry name" value="RADICAL_SAM"/>
    <property type="match status" value="1"/>
</dbReference>
<dbReference type="PROSITE" id="PS50926">
    <property type="entry name" value="TRAM"/>
    <property type="match status" value="1"/>
</dbReference>